<evidence type="ECO:0000255" key="1">
    <source>
        <dbReference type="PROSITE-ProRule" id="PRU00705"/>
    </source>
</evidence>
<evidence type="ECO:0000269" key="2">
    <source>
    </source>
</evidence>
<evidence type="ECO:0000305" key="3"/>
<sequence length="71" mass="7809">QDLPPLDPSAEQAQALNYVKDTAEAADHPAHQEGEQCDNCMFFQADSQGCQLFPQNSVEPAGWCQSWTAQN</sequence>
<accession>P00264</accession>
<gene>
    <name type="primary">hip</name>
</gene>
<proteinExistence type="evidence at protein level"/>
<reference key="1">
    <citation type="journal article" date="1977" name="J. Biol. Chem.">
        <title>Primary structure of a high potential iron sulfur protein from a moderately halophilic denitrifying coccus.</title>
        <authorList>
            <person name="Tedro S.M."/>
            <person name="Meyer T.E."/>
            <person name="Kamen M.D."/>
        </authorList>
    </citation>
    <scope>PROTEIN SEQUENCE</scope>
    <scope>PYROGLUTAMATE FORMATION AT GLN-1</scope>
</reference>
<name>HIP_HALH2</name>
<comment type="function">
    <text>Specific class of high-redox-potential 4Fe-4S ferredoxins. Functions in anaerobic electron transport in most purple and in some other photosynthetic bacteria and in at least one genus (Paracoccus) of halophilic, denitrifying bacteria.</text>
</comment>
<comment type="subunit">
    <text evidence="3">Homodimer.</text>
</comment>
<comment type="similarity">
    <text evidence="1">Belongs to the high-potential iron-sulfur protein (HiPIP) family.</text>
</comment>
<feature type="chain" id="PRO_0000220423" description="High-potential iron-sulfur protein">
    <location>
        <begin position="1"/>
        <end position="71"/>
    </location>
</feature>
<feature type="binding site" evidence="1">
    <location>
        <position position="37"/>
    </location>
    <ligand>
        <name>[4Fe-4S] cluster</name>
        <dbReference type="ChEBI" id="CHEBI:49883"/>
    </ligand>
</feature>
<feature type="binding site" evidence="1">
    <location>
        <position position="40"/>
    </location>
    <ligand>
        <name>[4Fe-4S] cluster</name>
        <dbReference type="ChEBI" id="CHEBI:49883"/>
    </ligand>
</feature>
<feature type="binding site" evidence="1">
    <location>
        <position position="50"/>
    </location>
    <ligand>
        <name>[4Fe-4S] cluster</name>
        <dbReference type="ChEBI" id="CHEBI:49883"/>
    </ligand>
</feature>
<feature type="binding site" evidence="1">
    <location>
        <position position="64"/>
    </location>
    <ligand>
        <name>[4Fe-4S] cluster</name>
        <dbReference type="ChEBI" id="CHEBI:49883"/>
    </ligand>
</feature>
<feature type="modified residue" description="Pyrrolidone carboxylic acid" evidence="2">
    <location>
        <position position="1"/>
    </location>
</feature>
<dbReference type="SMR" id="P00264"/>
<dbReference type="GO" id="GO:0051539">
    <property type="term" value="F:4 iron, 4 sulfur cluster binding"/>
    <property type="evidence" value="ECO:0007669"/>
    <property type="project" value="UniProtKB-KW"/>
</dbReference>
<dbReference type="GO" id="GO:0009055">
    <property type="term" value="F:electron transfer activity"/>
    <property type="evidence" value="ECO:0007669"/>
    <property type="project" value="InterPro"/>
</dbReference>
<dbReference type="GO" id="GO:0046872">
    <property type="term" value="F:metal ion binding"/>
    <property type="evidence" value="ECO:0007669"/>
    <property type="project" value="UniProtKB-KW"/>
</dbReference>
<dbReference type="GO" id="GO:0019646">
    <property type="term" value="P:aerobic electron transport chain"/>
    <property type="evidence" value="ECO:0007669"/>
    <property type="project" value="InterPro"/>
</dbReference>
<dbReference type="Gene3D" id="4.10.490.10">
    <property type="entry name" value="High potential iron-sulphur protein"/>
    <property type="match status" value="1"/>
</dbReference>
<dbReference type="InterPro" id="IPR000170">
    <property type="entry name" value="High_potential_FeS_prot"/>
</dbReference>
<dbReference type="InterPro" id="IPR036369">
    <property type="entry name" value="HIPIP_sf"/>
</dbReference>
<dbReference type="Pfam" id="PF01355">
    <property type="entry name" value="HIPIP"/>
    <property type="match status" value="1"/>
</dbReference>
<dbReference type="SUPFAM" id="SSF57652">
    <property type="entry name" value="HIPIP (high potential iron protein)"/>
    <property type="match status" value="1"/>
</dbReference>
<dbReference type="PROSITE" id="PS51373">
    <property type="entry name" value="HIPIP"/>
    <property type="match status" value="1"/>
</dbReference>
<organism>
    <name type="scientific">Halomonas halodenitrificans (strain ATCC 12084 / NCIMB 8669)</name>
    <name type="common">Paracoccus halodenitrificans</name>
    <dbReference type="NCBI Taxonomy" id="31991"/>
    <lineage>
        <taxon>Bacteria</taxon>
        <taxon>Pseudomonadati</taxon>
        <taxon>Pseudomonadota</taxon>
        <taxon>Gammaproteobacteria</taxon>
        <taxon>Oceanospirillales</taxon>
        <taxon>Halomonadaceae</taxon>
        <taxon>Halomonas</taxon>
    </lineage>
</organism>
<keyword id="KW-0004">4Fe-4S</keyword>
<keyword id="KW-0903">Direct protein sequencing</keyword>
<keyword id="KW-0249">Electron transport</keyword>
<keyword id="KW-0408">Iron</keyword>
<keyword id="KW-0411">Iron-sulfur</keyword>
<keyword id="KW-0479">Metal-binding</keyword>
<keyword id="KW-0873">Pyrrolidone carboxylic acid</keyword>
<keyword id="KW-0813">Transport</keyword>
<protein>
    <recommendedName>
        <fullName>High-potential iron-sulfur protein</fullName>
        <shortName>HiPIP</shortName>
    </recommendedName>
</protein>